<sequence>MAVKIRLKRMGTKKKPFYRIVVADSRSPRDGRFIETIGTYDPVAEPAQVKIDEELALKWLQNGAKPSDTVRSLLSKQGILEKFHNLKYGK</sequence>
<reference key="1">
    <citation type="journal article" date="2004" name="Nucleic Acids Res.">
        <title>Thermoadaptation trait revealed by the genome sequence of thermophilic Geobacillus kaustophilus.</title>
        <authorList>
            <person name="Takami H."/>
            <person name="Takaki Y."/>
            <person name="Chee G.-J."/>
            <person name="Nishi S."/>
            <person name="Shimamura S."/>
            <person name="Suzuki H."/>
            <person name="Matsui S."/>
            <person name="Uchiyama I."/>
        </authorList>
    </citation>
    <scope>NUCLEOTIDE SEQUENCE [LARGE SCALE GENOMIC DNA]</scope>
    <source>
        <strain>HTA426</strain>
    </source>
</reference>
<name>RS16_GEOKA</name>
<keyword id="KW-1185">Reference proteome</keyword>
<keyword id="KW-0687">Ribonucleoprotein</keyword>
<keyword id="KW-0689">Ribosomal protein</keyword>
<proteinExistence type="inferred from homology"/>
<gene>
    <name evidence="1" type="primary">rpsP</name>
    <name type="ordered locus">GK1197</name>
</gene>
<protein>
    <recommendedName>
        <fullName evidence="1">Small ribosomal subunit protein bS16</fullName>
    </recommendedName>
    <alternativeName>
        <fullName evidence="2">30S ribosomal protein S16</fullName>
    </alternativeName>
</protein>
<comment type="similarity">
    <text evidence="1">Belongs to the bacterial ribosomal protein bS16 family.</text>
</comment>
<accession>Q5L0P8</accession>
<evidence type="ECO:0000255" key="1">
    <source>
        <dbReference type="HAMAP-Rule" id="MF_00385"/>
    </source>
</evidence>
<evidence type="ECO:0000305" key="2"/>
<organism>
    <name type="scientific">Geobacillus kaustophilus (strain HTA426)</name>
    <dbReference type="NCBI Taxonomy" id="235909"/>
    <lineage>
        <taxon>Bacteria</taxon>
        <taxon>Bacillati</taxon>
        <taxon>Bacillota</taxon>
        <taxon>Bacilli</taxon>
        <taxon>Bacillales</taxon>
        <taxon>Anoxybacillaceae</taxon>
        <taxon>Geobacillus</taxon>
        <taxon>Geobacillus thermoleovorans group</taxon>
    </lineage>
</organism>
<feature type="chain" id="PRO_0000243810" description="Small ribosomal subunit protein bS16">
    <location>
        <begin position="1"/>
        <end position="90"/>
    </location>
</feature>
<dbReference type="EMBL" id="BA000043">
    <property type="protein sequence ID" value="BAD75482.1"/>
    <property type="molecule type" value="Genomic_DNA"/>
</dbReference>
<dbReference type="RefSeq" id="WP_011230697.1">
    <property type="nucleotide sequence ID" value="NC_006510.1"/>
</dbReference>
<dbReference type="SMR" id="Q5L0P8"/>
<dbReference type="STRING" id="235909.GK1197"/>
<dbReference type="GeneID" id="32063091"/>
<dbReference type="KEGG" id="gka:GK1197"/>
<dbReference type="eggNOG" id="COG0228">
    <property type="taxonomic scope" value="Bacteria"/>
</dbReference>
<dbReference type="HOGENOM" id="CLU_100590_5_0_9"/>
<dbReference type="Proteomes" id="UP000001172">
    <property type="component" value="Chromosome"/>
</dbReference>
<dbReference type="GO" id="GO:0005737">
    <property type="term" value="C:cytoplasm"/>
    <property type="evidence" value="ECO:0007669"/>
    <property type="project" value="UniProtKB-ARBA"/>
</dbReference>
<dbReference type="GO" id="GO:0015935">
    <property type="term" value="C:small ribosomal subunit"/>
    <property type="evidence" value="ECO:0007669"/>
    <property type="project" value="TreeGrafter"/>
</dbReference>
<dbReference type="GO" id="GO:0003735">
    <property type="term" value="F:structural constituent of ribosome"/>
    <property type="evidence" value="ECO:0007669"/>
    <property type="project" value="InterPro"/>
</dbReference>
<dbReference type="GO" id="GO:0006412">
    <property type="term" value="P:translation"/>
    <property type="evidence" value="ECO:0007669"/>
    <property type="project" value="UniProtKB-UniRule"/>
</dbReference>
<dbReference type="FunFam" id="3.30.1320.10:FF:000002">
    <property type="entry name" value="30S ribosomal protein S16"/>
    <property type="match status" value="1"/>
</dbReference>
<dbReference type="Gene3D" id="3.30.1320.10">
    <property type="match status" value="1"/>
</dbReference>
<dbReference type="HAMAP" id="MF_00385">
    <property type="entry name" value="Ribosomal_bS16"/>
    <property type="match status" value="1"/>
</dbReference>
<dbReference type="InterPro" id="IPR000307">
    <property type="entry name" value="Ribosomal_bS16"/>
</dbReference>
<dbReference type="InterPro" id="IPR023803">
    <property type="entry name" value="Ribosomal_bS16_dom_sf"/>
</dbReference>
<dbReference type="NCBIfam" id="TIGR00002">
    <property type="entry name" value="S16"/>
    <property type="match status" value="1"/>
</dbReference>
<dbReference type="PANTHER" id="PTHR12919">
    <property type="entry name" value="30S RIBOSOMAL PROTEIN S16"/>
    <property type="match status" value="1"/>
</dbReference>
<dbReference type="PANTHER" id="PTHR12919:SF20">
    <property type="entry name" value="SMALL RIBOSOMAL SUBUNIT PROTEIN BS16M"/>
    <property type="match status" value="1"/>
</dbReference>
<dbReference type="Pfam" id="PF00886">
    <property type="entry name" value="Ribosomal_S16"/>
    <property type="match status" value="1"/>
</dbReference>
<dbReference type="SUPFAM" id="SSF54565">
    <property type="entry name" value="Ribosomal protein S16"/>
    <property type="match status" value="1"/>
</dbReference>